<reference key="1">
    <citation type="journal article" date="2002" name="Lancet">
        <title>Genome and virulence determinants of high virulence community-acquired MRSA.</title>
        <authorList>
            <person name="Baba T."/>
            <person name="Takeuchi F."/>
            <person name="Kuroda M."/>
            <person name="Yuzawa H."/>
            <person name="Aoki K."/>
            <person name="Oguchi A."/>
            <person name="Nagai Y."/>
            <person name="Iwama N."/>
            <person name="Asano K."/>
            <person name="Naimi T."/>
            <person name="Kuroda H."/>
            <person name="Cui L."/>
            <person name="Yamamoto K."/>
            <person name="Hiramatsu K."/>
        </authorList>
    </citation>
    <scope>NUCLEOTIDE SEQUENCE [LARGE SCALE GENOMIC DNA]</scope>
    <source>
        <strain>MW2</strain>
    </source>
</reference>
<protein>
    <recommendedName>
        <fullName evidence="1">Elongation factor P</fullName>
        <shortName evidence="1">EF-P</shortName>
    </recommendedName>
</protein>
<organism>
    <name type="scientific">Staphylococcus aureus (strain MW2)</name>
    <dbReference type="NCBI Taxonomy" id="196620"/>
    <lineage>
        <taxon>Bacteria</taxon>
        <taxon>Bacillati</taxon>
        <taxon>Bacillota</taxon>
        <taxon>Bacilli</taxon>
        <taxon>Bacillales</taxon>
        <taxon>Staphylococcaceae</taxon>
        <taxon>Staphylococcus</taxon>
    </lineage>
</organism>
<accession>P64039</accession>
<accession>Q99TW5</accession>
<sequence>MISVNDFKTGLTISVDNAIWKVIDFQHVKPGKGSAFVRSKLRNLRTGAIQEKTFRAGEKVEPAMIENRRMQYLYADGDNHVFMDNESFEQTELSSDYLKEELNYLKEGMEVQIQTYEGETIGVELPKTVELTVTETEPGIKGDTATGATKSATVETGYTLNVPLFVNEGDVLIINTGDGSYISRG</sequence>
<proteinExistence type="inferred from homology"/>
<keyword id="KW-0963">Cytoplasm</keyword>
<keyword id="KW-0251">Elongation factor</keyword>
<keyword id="KW-0648">Protein biosynthesis</keyword>
<comment type="function">
    <text evidence="1">Involved in peptide bond synthesis. Stimulates efficient translation and peptide-bond synthesis on native or reconstituted 70S ribosomes in vitro. Probably functions indirectly by altering the affinity of the ribosome for aminoacyl-tRNA, thus increasing their reactivity as acceptors for peptidyl transferase.</text>
</comment>
<comment type="pathway">
    <text evidence="1">Protein biosynthesis; polypeptide chain elongation.</text>
</comment>
<comment type="subcellular location">
    <subcellularLocation>
        <location evidence="1">Cytoplasm</location>
    </subcellularLocation>
</comment>
<comment type="similarity">
    <text evidence="1">Belongs to the elongation factor P family.</text>
</comment>
<evidence type="ECO:0000255" key="1">
    <source>
        <dbReference type="HAMAP-Rule" id="MF_00141"/>
    </source>
</evidence>
<dbReference type="EMBL" id="BA000033">
    <property type="protein sequence ID" value="BAB95346.1"/>
    <property type="molecule type" value="Genomic_DNA"/>
</dbReference>
<dbReference type="RefSeq" id="WP_000626504.1">
    <property type="nucleotide sequence ID" value="NC_003923.1"/>
</dbReference>
<dbReference type="SMR" id="P64039"/>
<dbReference type="KEGG" id="sam:MW1481"/>
<dbReference type="HOGENOM" id="CLU_074944_0_1_9"/>
<dbReference type="UniPathway" id="UPA00345"/>
<dbReference type="GO" id="GO:0005737">
    <property type="term" value="C:cytoplasm"/>
    <property type="evidence" value="ECO:0007669"/>
    <property type="project" value="UniProtKB-SubCell"/>
</dbReference>
<dbReference type="GO" id="GO:0003746">
    <property type="term" value="F:translation elongation factor activity"/>
    <property type="evidence" value="ECO:0007669"/>
    <property type="project" value="UniProtKB-UniRule"/>
</dbReference>
<dbReference type="GO" id="GO:0043043">
    <property type="term" value="P:peptide biosynthetic process"/>
    <property type="evidence" value="ECO:0007669"/>
    <property type="project" value="InterPro"/>
</dbReference>
<dbReference type="CDD" id="cd04470">
    <property type="entry name" value="S1_EF-P_repeat_1"/>
    <property type="match status" value="1"/>
</dbReference>
<dbReference type="CDD" id="cd05794">
    <property type="entry name" value="S1_EF-P_repeat_2"/>
    <property type="match status" value="1"/>
</dbReference>
<dbReference type="FunFam" id="2.30.30.30:FF:000010">
    <property type="entry name" value="Elongation factor P"/>
    <property type="match status" value="1"/>
</dbReference>
<dbReference type="FunFam" id="2.40.50.140:FF:000004">
    <property type="entry name" value="Elongation factor P"/>
    <property type="match status" value="1"/>
</dbReference>
<dbReference type="FunFam" id="2.40.50.140:FF:000009">
    <property type="entry name" value="Elongation factor P"/>
    <property type="match status" value="1"/>
</dbReference>
<dbReference type="Gene3D" id="2.30.30.30">
    <property type="match status" value="1"/>
</dbReference>
<dbReference type="Gene3D" id="2.40.50.140">
    <property type="entry name" value="Nucleic acid-binding proteins"/>
    <property type="match status" value="2"/>
</dbReference>
<dbReference type="HAMAP" id="MF_00141">
    <property type="entry name" value="EF_P"/>
    <property type="match status" value="1"/>
</dbReference>
<dbReference type="InterPro" id="IPR015365">
    <property type="entry name" value="Elong-fact-P_C"/>
</dbReference>
<dbReference type="InterPro" id="IPR012340">
    <property type="entry name" value="NA-bd_OB-fold"/>
</dbReference>
<dbReference type="InterPro" id="IPR014722">
    <property type="entry name" value="Rib_uL2_dom2"/>
</dbReference>
<dbReference type="InterPro" id="IPR020599">
    <property type="entry name" value="Transl_elong_fac_P/YeiP"/>
</dbReference>
<dbReference type="InterPro" id="IPR013185">
    <property type="entry name" value="Transl_elong_KOW-like"/>
</dbReference>
<dbReference type="InterPro" id="IPR001059">
    <property type="entry name" value="Transl_elong_P/YeiP_cen"/>
</dbReference>
<dbReference type="InterPro" id="IPR013852">
    <property type="entry name" value="Transl_elong_P/YeiP_CS"/>
</dbReference>
<dbReference type="InterPro" id="IPR011768">
    <property type="entry name" value="Transl_elongation_fac_P"/>
</dbReference>
<dbReference type="InterPro" id="IPR008991">
    <property type="entry name" value="Translation_prot_SH3-like_sf"/>
</dbReference>
<dbReference type="NCBIfam" id="TIGR00038">
    <property type="entry name" value="efp"/>
    <property type="match status" value="1"/>
</dbReference>
<dbReference type="NCBIfam" id="NF001810">
    <property type="entry name" value="PRK00529.1"/>
    <property type="match status" value="1"/>
</dbReference>
<dbReference type="PANTHER" id="PTHR30053">
    <property type="entry name" value="ELONGATION FACTOR P"/>
    <property type="match status" value="1"/>
</dbReference>
<dbReference type="PANTHER" id="PTHR30053:SF12">
    <property type="entry name" value="ELONGATION FACTOR P (EF-P) FAMILY PROTEIN"/>
    <property type="match status" value="1"/>
</dbReference>
<dbReference type="Pfam" id="PF01132">
    <property type="entry name" value="EFP"/>
    <property type="match status" value="1"/>
</dbReference>
<dbReference type="Pfam" id="PF08207">
    <property type="entry name" value="EFP_N"/>
    <property type="match status" value="1"/>
</dbReference>
<dbReference type="Pfam" id="PF09285">
    <property type="entry name" value="Elong-fact-P_C"/>
    <property type="match status" value="1"/>
</dbReference>
<dbReference type="PIRSF" id="PIRSF005901">
    <property type="entry name" value="EF-P"/>
    <property type="match status" value="1"/>
</dbReference>
<dbReference type="SMART" id="SM01185">
    <property type="entry name" value="EFP"/>
    <property type="match status" value="1"/>
</dbReference>
<dbReference type="SMART" id="SM00841">
    <property type="entry name" value="Elong-fact-P_C"/>
    <property type="match status" value="1"/>
</dbReference>
<dbReference type="SUPFAM" id="SSF50249">
    <property type="entry name" value="Nucleic acid-binding proteins"/>
    <property type="match status" value="2"/>
</dbReference>
<dbReference type="SUPFAM" id="SSF50104">
    <property type="entry name" value="Translation proteins SH3-like domain"/>
    <property type="match status" value="1"/>
</dbReference>
<dbReference type="PROSITE" id="PS01275">
    <property type="entry name" value="EFP"/>
    <property type="match status" value="1"/>
</dbReference>
<feature type="chain" id="PRO_0000094333" description="Elongation factor P">
    <location>
        <begin position="1"/>
        <end position="185"/>
    </location>
</feature>
<name>EFP_STAAW</name>
<gene>
    <name evidence="1" type="primary">efp</name>
    <name type="ordered locus">MW1481</name>
</gene>